<keyword id="KW-0414">Isoprene biosynthesis</keyword>
<keyword id="KW-0464">Manganese</keyword>
<keyword id="KW-0479">Metal-binding</keyword>
<keyword id="KW-0521">NADP</keyword>
<keyword id="KW-0560">Oxidoreductase</keyword>
<name>DXR_CHLCV</name>
<comment type="function">
    <text evidence="1">Catalyzes the NADPH-dependent rearrangement and reduction of 1-deoxy-D-xylulose-5-phosphate (DXP) to 2-C-methyl-D-erythritol 4-phosphate (MEP).</text>
</comment>
<comment type="catalytic activity">
    <reaction evidence="1">
        <text>2-C-methyl-D-erythritol 4-phosphate + NADP(+) = 1-deoxy-D-xylulose 5-phosphate + NADPH + H(+)</text>
        <dbReference type="Rhea" id="RHEA:13717"/>
        <dbReference type="ChEBI" id="CHEBI:15378"/>
        <dbReference type="ChEBI" id="CHEBI:57783"/>
        <dbReference type="ChEBI" id="CHEBI:57792"/>
        <dbReference type="ChEBI" id="CHEBI:58262"/>
        <dbReference type="ChEBI" id="CHEBI:58349"/>
        <dbReference type="EC" id="1.1.1.267"/>
    </reaction>
    <physiologicalReaction direction="right-to-left" evidence="1">
        <dbReference type="Rhea" id="RHEA:13719"/>
    </physiologicalReaction>
</comment>
<comment type="cofactor">
    <cofactor evidence="1">
        <name>Mg(2+)</name>
        <dbReference type="ChEBI" id="CHEBI:18420"/>
    </cofactor>
    <cofactor evidence="1">
        <name>Mn(2+)</name>
        <dbReference type="ChEBI" id="CHEBI:29035"/>
    </cofactor>
</comment>
<comment type="pathway">
    <text evidence="1">Isoprenoid biosynthesis; isopentenyl diphosphate biosynthesis via DXP pathway; isopentenyl diphosphate from 1-deoxy-D-xylulose 5-phosphate: step 1/6.</text>
</comment>
<comment type="similarity">
    <text evidence="1">Belongs to the DXR family.</text>
</comment>
<reference key="1">
    <citation type="journal article" date="2003" name="Nucleic Acids Res.">
        <title>Genome sequence of Chlamydophila caviae (Chlamydia psittaci GPIC): examining the role of niche-specific genes in the evolution of the Chlamydiaceae.</title>
        <authorList>
            <person name="Read T.D."/>
            <person name="Myers G.S.A."/>
            <person name="Brunham R.C."/>
            <person name="Nelson W.C."/>
            <person name="Paulsen I.T."/>
            <person name="Heidelberg J.F."/>
            <person name="Holtzapple E.K."/>
            <person name="Khouri H.M."/>
            <person name="Federova N.B."/>
            <person name="Carty H.A."/>
            <person name="Umayam L.A."/>
            <person name="Haft D.H."/>
            <person name="Peterson J.D."/>
            <person name="Beanan M.J."/>
            <person name="White O."/>
            <person name="Salzberg S.L."/>
            <person name="Hsia R.-C."/>
            <person name="McClarty G."/>
            <person name="Rank R.G."/>
            <person name="Bavoil P.M."/>
            <person name="Fraser C.M."/>
        </authorList>
    </citation>
    <scope>NUCLEOTIDE SEQUENCE [LARGE SCALE GENOMIC DNA]</scope>
    <source>
        <strain>ATCC VR-813 / DSM 19441 / 03DC25 / GPIC</strain>
    </source>
</reference>
<gene>
    <name evidence="1" type="primary">dxr</name>
    <name type="ordered locus">CCA_00441</name>
</gene>
<organism>
    <name type="scientific">Chlamydia caviae (strain ATCC VR-813 / DSM 19441 / 03DC25 / GPIC)</name>
    <name type="common">Chlamydophila caviae</name>
    <dbReference type="NCBI Taxonomy" id="227941"/>
    <lineage>
        <taxon>Bacteria</taxon>
        <taxon>Pseudomonadati</taxon>
        <taxon>Chlamydiota</taxon>
        <taxon>Chlamydiia</taxon>
        <taxon>Chlamydiales</taxon>
        <taxon>Chlamydiaceae</taxon>
        <taxon>Chlamydia/Chlamydophila group</taxon>
        <taxon>Chlamydia</taxon>
    </lineage>
</organism>
<feature type="chain" id="PRO_0000163633" description="1-deoxy-D-xylulose 5-phosphate reductoisomerase">
    <location>
        <begin position="1"/>
        <end position="379"/>
    </location>
</feature>
<feature type="binding site" evidence="1">
    <location>
        <position position="10"/>
    </location>
    <ligand>
        <name>NADPH</name>
        <dbReference type="ChEBI" id="CHEBI:57783"/>
    </ligand>
</feature>
<feature type="binding site" evidence="1">
    <location>
        <position position="11"/>
    </location>
    <ligand>
        <name>NADPH</name>
        <dbReference type="ChEBI" id="CHEBI:57783"/>
    </ligand>
</feature>
<feature type="binding site" evidence="1">
    <location>
        <position position="12"/>
    </location>
    <ligand>
        <name>NADPH</name>
        <dbReference type="ChEBI" id="CHEBI:57783"/>
    </ligand>
</feature>
<feature type="binding site" evidence="1">
    <location>
        <position position="13"/>
    </location>
    <ligand>
        <name>NADPH</name>
        <dbReference type="ChEBI" id="CHEBI:57783"/>
    </ligand>
</feature>
<feature type="binding site" evidence="1">
    <location>
        <position position="39"/>
    </location>
    <ligand>
        <name>NADPH</name>
        <dbReference type="ChEBI" id="CHEBI:57783"/>
    </ligand>
</feature>
<feature type="binding site" evidence="1">
    <location>
        <position position="121"/>
    </location>
    <ligand>
        <name>NADPH</name>
        <dbReference type="ChEBI" id="CHEBI:57783"/>
    </ligand>
</feature>
<feature type="binding site" evidence="1">
    <location>
        <position position="122"/>
    </location>
    <ligand>
        <name>1-deoxy-D-xylulose 5-phosphate</name>
        <dbReference type="ChEBI" id="CHEBI:57792"/>
    </ligand>
</feature>
<feature type="binding site" evidence="1">
    <location>
        <position position="123"/>
    </location>
    <ligand>
        <name>NADPH</name>
        <dbReference type="ChEBI" id="CHEBI:57783"/>
    </ligand>
</feature>
<feature type="binding site" evidence="1">
    <location>
        <position position="147"/>
    </location>
    <ligand>
        <name>Mn(2+)</name>
        <dbReference type="ChEBI" id="CHEBI:29035"/>
    </ligand>
</feature>
<feature type="binding site" evidence="1">
    <location>
        <position position="148"/>
    </location>
    <ligand>
        <name>1-deoxy-D-xylulose 5-phosphate</name>
        <dbReference type="ChEBI" id="CHEBI:57792"/>
    </ligand>
</feature>
<feature type="binding site" evidence="1">
    <location>
        <position position="149"/>
    </location>
    <ligand>
        <name>1-deoxy-D-xylulose 5-phosphate</name>
        <dbReference type="ChEBI" id="CHEBI:57792"/>
    </ligand>
</feature>
<feature type="binding site" evidence="1">
    <location>
        <position position="149"/>
    </location>
    <ligand>
        <name>Mn(2+)</name>
        <dbReference type="ChEBI" id="CHEBI:29035"/>
    </ligand>
</feature>
<feature type="binding site" evidence="1">
    <location>
        <position position="173"/>
    </location>
    <ligand>
        <name>1-deoxy-D-xylulose 5-phosphate</name>
        <dbReference type="ChEBI" id="CHEBI:57792"/>
    </ligand>
</feature>
<feature type="binding site" evidence="1">
    <location>
        <position position="196"/>
    </location>
    <ligand>
        <name>1-deoxy-D-xylulose 5-phosphate</name>
        <dbReference type="ChEBI" id="CHEBI:57792"/>
    </ligand>
</feature>
<feature type="binding site" evidence="1">
    <location>
        <position position="202"/>
    </location>
    <ligand>
        <name>NADPH</name>
        <dbReference type="ChEBI" id="CHEBI:57783"/>
    </ligand>
</feature>
<feature type="binding site" evidence="1">
    <location>
        <position position="209"/>
    </location>
    <ligand>
        <name>1-deoxy-D-xylulose 5-phosphate</name>
        <dbReference type="ChEBI" id="CHEBI:57792"/>
    </ligand>
</feature>
<feature type="binding site" evidence="1">
    <location>
        <position position="214"/>
    </location>
    <ligand>
        <name>1-deoxy-D-xylulose 5-phosphate</name>
        <dbReference type="ChEBI" id="CHEBI:57792"/>
    </ligand>
</feature>
<feature type="binding site" evidence="1">
    <location>
        <position position="215"/>
    </location>
    <ligand>
        <name>1-deoxy-D-xylulose 5-phosphate</name>
        <dbReference type="ChEBI" id="CHEBI:57792"/>
    </ligand>
</feature>
<feature type="binding site" evidence="1">
    <location>
        <position position="218"/>
    </location>
    <ligand>
        <name>1-deoxy-D-xylulose 5-phosphate</name>
        <dbReference type="ChEBI" id="CHEBI:57792"/>
    </ligand>
</feature>
<feature type="binding site" evidence="1">
    <location>
        <position position="218"/>
    </location>
    <ligand>
        <name>Mn(2+)</name>
        <dbReference type="ChEBI" id="CHEBI:29035"/>
    </ligand>
</feature>
<protein>
    <recommendedName>
        <fullName evidence="1">1-deoxy-D-xylulose 5-phosphate reductoisomerase</fullName>
        <shortName evidence="1">DXP reductoisomerase</shortName>
        <ecNumber evidence="1">1.1.1.267</ecNumber>
    </recommendedName>
    <alternativeName>
        <fullName evidence="1">1-deoxyxylulose-5-phosphate reductoisomerase</fullName>
    </alternativeName>
    <alternativeName>
        <fullName evidence="1">2-C-methyl-D-erythritol 4-phosphate synthase</fullName>
    </alternativeName>
</protein>
<evidence type="ECO:0000255" key="1">
    <source>
        <dbReference type="HAMAP-Rule" id="MF_00183"/>
    </source>
</evidence>
<proteinExistence type="inferred from homology"/>
<accession>Q823G9</accession>
<sequence>MKHLAILGSTGSIGQQTLKIIRSLPHLFKVVALASYGNNKDVFFEQIREFSPSIVSVYDEQSYFEISKEFPNIEVFLGEEGLLAAATAGEVDTIVAASSGVVALPAIIEAMKLGKTLALANKEVLVSAGEIIKEIAKQYQTRILPIDSEHNALYQCLEGKNTSEVKKLVLTASGGPLLYKSKEDLSRVTIRDVLKHPIWNMGAKITVDSSTLVNKGLEIIEAYWLFGLENAEIDAVVHPQSLIHGMVEFQDGTVLSVMNPPSMLFPIQHALTAPKRYPAPHKGIDFSVKQTLEFFPVDEERFPSIGLARQVLREKGSSGPFLNAANEVLVQRFLTEEIAWCDILDKLTRLMENYRVSSCSSLDDVFAVDKEARALAQEI</sequence>
<dbReference type="EC" id="1.1.1.267" evidence="1"/>
<dbReference type="EMBL" id="AE015925">
    <property type="protein sequence ID" value="AAP05187.1"/>
    <property type="molecule type" value="Genomic_DNA"/>
</dbReference>
<dbReference type="RefSeq" id="WP_011006403.1">
    <property type="nucleotide sequence ID" value="NC_003361.3"/>
</dbReference>
<dbReference type="SMR" id="Q823G9"/>
<dbReference type="STRING" id="227941.CCA_00441"/>
<dbReference type="KEGG" id="cca:CCA_00441"/>
<dbReference type="eggNOG" id="COG0743">
    <property type="taxonomic scope" value="Bacteria"/>
</dbReference>
<dbReference type="HOGENOM" id="CLU_035714_4_0_0"/>
<dbReference type="OrthoDB" id="9806546at2"/>
<dbReference type="UniPathway" id="UPA00056">
    <property type="reaction ID" value="UER00092"/>
</dbReference>
<dbReference type="Proteomes" id="UP000002193">
    <property type="component" value="Chromosome"/>
</dbReference>
<dbReference type="GO" id="GO:0030604">
    <property type="term" value="F:1-deoxy-D-xylulose-5-phosphate reductoisomerase activity"/>
    <property type="evidence" value="ECO:0007669"/>
    <property type="project" value="UniProtKB-UniRule"/>
</dbReference>
<dbReference type="GO" id="GO:0030145">
    <property type="term" value="F:manganese ion binding"/>
    <property type="evidence" value="ECO:0007669"/>
    <property type="project" value="TreeGrafter"/>
</dbReference>
<dbReference type="GO" id="GO:0070402">
    <property type="term" value="F:NADPH binding"/>
    <property type="evidence" value="ECO:0007669"/>
    <property type="project" value="InterPro"/>
</dbReference>
<dbReference type="GO" id="GO:0051484">
    <property type="term" value="P:isopentenyl diphosphate biosynthetic process, methylerythritol 4-phosphate pathway involved in terpenoid biosynthetic process"/>
    <property type="evidence" value="ECO:0007669"/>
    <property type="project" value="TreeGrafter"/>
</dbReference>
<dbReference type="FunFam" id="3.40.50.720:FF:000045">
    <property type="entry name" value="1-deoxy-D-xylulose 5-phosphate reductoisomerase"/>
    <property type="match status" value="1"/>
</dbReference>
<dbReference type="Gene3D" id="1.10.1740.10">
    <property type="match status" value="1"/>
</dbReference>
<dbReference type="Gene3D" id="3.40.50.720">
    <property type="entry name" value="NAD(P)-binding Rossmann-like Domain"/>
    <property type="match status" value="1"/>
</dbReference>
<dbReference type="HAMAP" id="MF_00183">
    <property type="entry name" value="DXP_reductoisom"/>
    <property type="match status" value="1"/>
</dbReference>
<dbReference type="InterPro" id="IPR003821">
    <property type="entry name" value="DXP_reductoisomerase"/>
</dbReference>
<dbReference type="InterPro" id="IPR013644">
    <property type="entry name" value="DXP_reductoisomerase_C"/>
</dbReference>
<dbReference type="InterPro" id="IPR013512">
    <property type="entry name" value="DXP_reductoisomerase_N"/>
</dbReference>
<dbReference type="InterPro" id="IPR026877">
    <property type="entry name" value="DXPR_C"/>
</dbReference>
<dbReference type="InterPro" id="IPR036169">
    <property type="entry name" value="DXPR_C_sf"/>
</dbReference>
<dbReference type="InterPro" id="IPR036291">
    <property type="entry name" value="NAD(P)-bd_dom_sf"/>
</dbReference>
<dbReference type="NCBIfam" id="TIGR00243">
    <property type="entry name" value="Dxr"/>
    <property type="match status" value="1"/>
</dbReference>
<dbReference type="PANTHER" id="PTHR30525">
    <property type="entry name" value="1-DEOXY-D-XYLULOSE 5-PHOSPHATE REDUCTOISOMERASE"/>
    <property type="match status" value="1"/>
</dbReference>
<dbReference type="PANTHER" id="PTHR30525:SF0">
    <property type="entry name" value="1-DEOXY-D-XYLULOSE 5-PHOSPHATE REDUCTOISOMERASE, CHLOROPLASTIC"/>
    <property type="match status" value="1"/>
</dbReference>
<dbReference type="Pfam" id="PF08436">
    <property type="entry name" value="DXP_redisom_C"/>
    <property type="match status" value="1"/>
</dbReference>
<dbReference type="Pfam" id="PF02670">
    <property type="entry name" value="DXP_reductoisom"/>
    <property type="match status" value="1"/>
</dbReference>
<dbReference type="Pfam" id="PF13288">
    <property type="entry name" value="DXPR_C"/>
    <property type="match status" value="1"/>
</dbReference>
<dbReference type="PIRSF" id="PIRSF006205">
    <property type="entry name" value="Dxp_reductismrs"/>
    <property type="match status" value="1"/>
</dbReference>
<dbReference type="SUPFAM" id="SSF69055">
    <property type="entry name" value="1-deoxy-D-xylulose-5-phosphate reductoisomerase, C-terminal domain"/>
    <property type="match status" value="1"/>
</dbReference>
<dbReference type="SUPFAM" id="SSF55347">
    <property type="entry name" value="Glyceraldehyde-3-phosphate dehydrogenase-like, C-terminal domain"/>
    <property type="match status" value="1"/>
</dbReference>
<dbReference type="SUPFAM" id="SSF51735">
    <property type="entry name" value="NAD(P)-binding Rossmann-fold domains"/>
    <property type="match status" value="1"/>
</dbReference>